<accession>Q9LFL5</accession>
<evidence type="ECO:0000305" key="1"/>
<keyword id="KW-1185">Reference proteome</keyword>
<keyword id="KW-0677">Repeat</keyword>
<gene>
    <name type="primary">PCMP-H92</name>
    <name type="ordered locus">At5g16860</name>
    <name type="ORF">F2K13_10</name>
</gene>
<sequence length="850" mass="94637">MIRRLLIPNAAAKSHQYIKVSLFSTSAPEITPPFIHKCKTISQVKLIHQKLLSFGILTLNLTSHLISTYISVGCLSHAVSLLRRFPPSDAGVYHWNSLIRSYGDNGCANKCLYLFGLMHSLSWTPDNYTFPFVFKACGEISSVRCGESAHALSLVTGFISNVFVGNALVAMYSRCRSLSDARKVFDEMSVWDVVSWNSIIESYAKLGKPKVALEMFSRMTNEFGCRPDNITLVNVLPPCASLGTHSLGKQLHCFAVTSEMIQNMFVGNCLVDMYAKCGMMDEANTVFSNMSVKDVVSWNAMVAGYSQIGRFEDAVRLFEKMQEEKIKMDVVTWSAAISGYAQRGLGYEALGVCRQMLSSGIKPNEVTLISVLSGCASVGALMHGKEIHCYAIKYPIDLRKNGHGDENMVINQLIDMYAKCKKVDTARAMFDSLSPKERDVVTWTVMIGGYSQHGDANKALELLSEMFEEDCQTRPNAFTISCALVACASLAALRIGKQIHAYALRNQQNAVPLFVSNCLIDMYAKCGSISDARLVFDNMMAKNEVTWTSLMTGYGMHGYGEEALGIFDEMRRIGFKLDGVTLLVVLYACSHSGMIDQGMEYFNRMKTVFGVSPGPEHYACLVDLLGRAGRLNAALRLIEEMPMEPPPVVWVAFLSCCRIHGKVELGEYAAEKITELASNHDGSYTLLSNLYANAGRWKDVTRIRSLMRHKGVKKRPGCSWVEGIKGTTTFFVGDKTHPHAKEIYQVLLDHMQRIKDIGYVPETGFALHDVDDEEKDDLLFEHSEKLALAYGILTTPQGAAIRITKNLRVCGDCHTAFTYMSRIIDHDIILRDSSRFHHFKNGSCSCKGYW</sequence>
<comment type="similarity">
    <text evidence="1">Belongs to the PPR family. PCMP-H subfamily.</text>
</comment>
<comment type="online information" name="Pentatricopeptide repeat proteins">
    <link uri="https://ppr.plantenergy.uwa.edu.au"/>
</comment>
<organism>
    <name type="scientific">Arabidopsis thaliana</name>
    <name type="common">Mouse-ear cress</name>
    <dbReference type="NCBI Taxonomy" id="3702"/>
    <lineage>
        <taxon>Eukaryota</taxon>
        <taxon>Viridiplantae</taxon>
        <taxon>Streptophyta</taxon>
        <taxon>Embryophyta</taxon>
        <taxon>Tracheophyta</taxon>
        <taxon>Spermatophyta</taxon>
        <taxon>Magnoliopsida</taxon>
        <taxon>eudicotyledons</taxon>
        <taxon>Gunneridae</taxon>
        <taxon>Pentapetalae</taxon>
        <taxon>rosids</taxon>
        <taxon>malvids</taxon>
        <taxon>Brassicales</taxon>
        <taxon>Brassicaceae</taxon>
        <taxon>Camelineae</taxon>
        <taxon>Arabidopsis</taxon>
    </lineage>
</organism>
<feature type="chain" id="PRO_0000363527" description="Pentatricopeptide repeat-containing protein At5g16860">
    <location>
        <begin position="1"/>
        <end position="850"/>
    </location>
</feature>
<feature type="repeat" description="PPR 1">
    <location>
        <begin position="58"/>
        <end position="88"/>
    </location>
</feature>
<feature type="repeat" description="PPR 2">
    <location>
        <begin position="91"/>
        <end position="125"/>
    </location>
</feature>
<feature type="repeat" description="PPR 3">
    <location>
        <begin position="126"/>
        <end position="160"/>
    </location>
</feature>
<feature type="repeat" description="PPR 4">
    <location>
        <begin position="161"/>
        <end position="191"/>
    </location>
</feature>
<feature type="repeat" description="PPR 5">
    <location>
        <begin position="192"/>
        <end position="227"/>
    </location>
</feature>
<feature type="repeat" description="PPR 6">
    <location>
        <begin position="228"/>
        <end position="262"/>
    </location>
</feature>
<feature type="repeat" description="PPR 7">
    <location>
        <begin position="263"/>
        <end position="293"/>
    </location>
</feature>
<feature type="repeat" description="PPR 8">
    <location>
        <begin position="294"/>
        <end position="328"/>
    </location>
</feature>
<feature type="repeat" description="PPR 9">
    <location>
        <begin position="329"/>
        <end position="363"/>
    </location>
</feature>
<feature type="repeat" description="PPR 10">
    <location>
        <begin position="364"/>
        <end position="398"/>
    </location>
</feature>
<feature type="repeat" description="PPR 11">
    <location>
        <begin position="406"/>
        <end position="436"/>
    </location>
</feature>
<feature type="repeat" description="PPR 12">
    <location>
        <begin position="439"/>
        <end position="473"/>
    </location>
</feature>
<feature type="repeat" description="PPR 13">
    <location>
        <begin position="476"/>
        <end position="510"/>
    </location>
</feature>
<feature type="repeat" description="PPR 14">
    <location>
        <begin position="512"/>
        <end position="542"/>
    </location>
</feature>
<feature type="repeat" description="PPR 15">
    <location>
        <begin position="543"/>
        <end position="577"/>
    </location>
</feature>
<feature type="repeat" description="PPR 16">
    <location>
        <begin position="578"/>
        <end position="608"/>
    </location>
</feature>
<feature type="repeat" description="PPR 17">
    <location>
        <begin position="614"/>
        <end position="644"/>
    </location>
</feature>
<feature type="region of interest" description="Type E motif">
    <location>
        <begin position="649"/>
        <end position="724"/>
    </location>
</feature>
<feature type="region of interest" description="Type E(+) motif">
    <location>
        <begin position="725"/>
        <end position="755"/>
    </location>
</feature>
<feature type="region of interest" description="Type DYW motif">
    <location>
        <begin position="756"/>
        <end position="850"/>
    </location>
</feature>
<dbReference type="EMBL" id="AL391141">
    <property type="protein sequence ID" value="CAC01699.1"/>
    <property type="molecule type" value="Genomic_DNA"/>
</dbReference>
<dbReference type="EMBL" id="CP002688">
    <property type="protein sequence ID" value="AED92350.1"/>
    <property type="molecule type" value="Genomic_DNA"/>
</dbReference>
<dbReference type="PIR" id="T51541">
    <property type="entry name" value="T51541"/>
</dbReference>
<dbReference type="RefSeq" id="NP_197188.1">
    <property type="nucleotide sequence ID" value="NM_121692.2"/>
</dbReference>
<dbReference type="SMR" id="Q9LFL5"/>
<dbReference type="FunCoup" id="Q9LFL5">
    <property type="interactions" value="148"/>
</dbReference>
<dbReference type="STRING" id="3702.Q9LFL5"/>
<dbReference type="PaxDb" id="3702-AT5G16860.1"/>
<dbReference type="ProteomicsDB" id="249271"/>
<dbReference type="EnsemblPlants" id="AT5G16860.1">
    <property type="protein sequence ID" value="AT5G16860.1"/>
    <property type="gene ID" value="AT5G16860"/>
</dbReference>
<dbReference type="GeneID" id="831549"/>
<dbReference type="Gramene" id="AT5G16860.1">
    <property type="protein sequence ID" value="AT5G16860.1"/>
    <property type="gene ID" value="AT5G16860"/>
</dbReference>
<dbReference type="KEGG" id="ath:AT5G16860"/>
<dbReference type="Araport" id="AT5G16860"/>
<dbReference type="TAIR" id="AT5G16860"/>
<dbReference type="eggNOG" id="KOG4197">
    <property type="taxonomic scope" value="Eukaryota"/>
</dbReference>
<dbReference type="HOGENOM" id="CLU_002706_15_9_1"/>
<dbReference type="InParanoid" id="Q9LFL5"/>
<dbReference type="OMA" id="CSWVEGI"/>
<dbReference type="PhylomeDB" id="Q9LFL5"/>
<dbReference type="PRO" id="PR:Q9LFL5"/>
<dbReference type="Proteomes" id="UP000006548">
    <property type="component" value="Chromosome 5"/>
</dbReference>
<dbReference type="ExpressionAtlas" id="Q9LFL5">
    <property type="expression patterns" value="baseline and differential"/>
</dbReference>
<dbReference type="GO" id="GO:0003723">
    <property type="term" value="F:RNA binding"/>
    <property type="evidence" value="ECO:0007669"/>
    <property type="project" value="InterPro"/>
</dbReference>
<dbReference type="GO" id="GO:0008270">
    <property type="term" value="F:zinc ion binding"/>
    <property type="evidence" value="ECO:0007669"/>
    <property type="project" value="InterPro"/>
</dbReference>
<dbReference type="GO" id="GO:0009451">
    <property type="term" value="P:RNA modification"/>
    <property type="evidence" value="ECO:0007669"/>
    <property type="project" value="InterPro"/>
</dbReference>
<dbReference type="FunFam" id="1.25.40.10:FF:000344">
    <property type="entry name" value="Pentatricopeptide repeat-containing protein"/>
    <property type="match status" value="1"/>
</dbReference>
<dbReference type="FunFam" id="1.25.40.10:FF:000900">
    <property type="entry name" value="Pentatricopeptide repeat-containing protein"/>
    <property type="match status" value="1"/>
</dbReference>
<dbReference type="FunFam" id="1.25.40.10:FF:001706">
    <property type="entry name" value="Pentatricopeptide repeat-containing protein At5g16860"/>
    <property type="match status" value="1"/>
</dbReference>
<dbReference type="FunFam" id="1.25.40.10:FF:000305">
    <property type="entry name" value="Pentatricopeptide repeat-containing protein mitochondrial"/>
    <property type="match status" value="1"/>
</dbReference>
<dbReference type="Gene3D" id="1.25.40.10">
    <property type="entry name" value="Tetratricopeptide repeat domain"/>
    <property type="match status" value="5"/>
</dbReference>
<dbReference type="InterPro" id="IPR032867">
    <property type="entry name" value="DYW_dom"/>
</dbReference>
<dbReference type="InterPro" id="IPR046848">
    <property type="entry name" value="E_motif"/>
</dbReference>
<dbReference type="InterPro" id="IPR046849">
    <property type="entry name" value="Eplus_motif"/>
</dbReference>
<dbReference type="InterPro" id="IPR002885">
    <property type="entry name" value="Pentatricopeptide_rpt"/>
</dbReference>
<dbReference type="InterPro" id="IPR046960">
    <property type="entry name" value="PPR_At4g14850-like_plant"/>
</dbReference>
<dbReference type="InterPro" id="IPR011990">
    <property type="entry name" value="TPR-like_helical_dom_sf"/>
</dbReference>
<dbReference type="NCBIfam" id="TIGR00756">
    <property type="entry name" value="PPR"/>
    <property type="match status" value="7"/>
</dbReference>
<dbReference type="PANTHER" id="PTHR47926:SF445">
    <property type="entry name" value="DYW DOMAIN-CONTAINING PROTEIN"/>
    <property type="match status" value="1"/>
</dbReference>
<dbReference type="PANTHER" id="PTHR47926">
    <property type="entry name" value="PENTATRICOPEPTIDE REPEAT-CONTAINING PROTEIN"/>
    <property type="match status" value="1"/>
</dbReference>
<dbReference type="Pfam" id="PF14432">
    <property type="entry name" value="DYW_deaminase"/>
    <property type="match status" value="1"/>
</dbReference>
<dbReference type="Pfam" id="PF20431">
    <property type="entry name" value="E_motif"/>
    <property type="match status" value="1"/>
</dbReference>
<dbReference type="Pfam" id="PF20430">
    <property type="entry name" value="Eplus_motif"/>
    <property type="match status" value="1"/>
</dbReference>
<dbReference type="Pfam" id="PF01535">
    <property type="entry name" value="PPR"/>
    <property type="match status" value="7"/>
</dbReference>
<dbReference type="Pfam" id="PF13041">
    <property type="entry name" value="PPR_2"/>
    <property type="match status" value="3"/>
</dbReference>
<dbReference type="SUPFAM" id="SSF48452">
    <property type="entry name" value="TPR-like"/>
    <property type="match status" value="1"/>
</dbReference>
<dbReference type="PROSITE" id="PS51375">
    <property type="entry name" value="PPR"/>
    <property type="match status" value="14"/>
</dbReference>
<reference key="1">
    <citation type="journal article" date="2000" name="Nature">
        <title>Sequence and analysis of chromosome 5 of the plant Arabidopsis thaliana.</title>
        <authorList>
            <person name="Tabata S."/>
            <person name="Kaneko T."/>
            <person name="Nakamura Y."/>
            <person name="Kotani H."/>
            <person name="Kato T."/>
            <person name="Asamizu E."/>
            <person name="Miyajima N."/>
            <person name="Sasamoto S."/>
            <person name="Kimura T."/>
            <person name="Hosouchi T."/>
            <person name="Kawashima K."/>
            <person name="Kohara M."/>
            <person name="Matsumoto M."/>
            <person name="Matsuno A."/>
            <person name="Muraki A."/>
            <person name="Nakayama S."/>
            <person name="Nakazaki N."/>
            <person name="Naruo K."/>
            <person name="Okumura S."/>
            <person name="Shinpo S."/>
            <person name="Takeuchi C."/>
            <person name="Wada T."/>
            <person name="Watanabe A."/>
            <person name="Yamada M."/>
            <person name="Yasuda M."/>
            <person name="Sato S."/>
            <person name="de la Bastide M."/>
            <person name="Huang E."/>
            <person name="Spiegel L."/>
            <person name="Gnoj L."/>
            <person name="O'Shaughnessy A."/>
            <person name="Preston R."/>
            <person name="Habermann K."/>
            <person name="Murray J."/>
            <person name="Johnson D."/>
            <person name="Rohlfing T."/>
            <person name="Nelson J."/>
            <person name="Stoneking T."/>
            <person name="Pepin K."/>
            <person name="Spieth J."/>
            <person name="Sekhon M."/>
            <person name="Armstrong J."/>
            <person name="Becker M."/>
            <person name="Belter E."/>
            <person name="Cordum H."/>
            <person name="Cordes M."/>
            <person name="Courtney L."/>
            <person name="Courtney W."/>
            <person name="Dante M."/>
            <person name="Du H."/>
            <person name="Edwards J."/>
            <person name="Fryman J."/>
            <person name="Haakensen B."/>
            <person name="Lamar E."/>
            <person name="Latreille P."/>
            <person name="Leonard S."/>
            <person name="Meyer R."/>
            <person name="Mulvaney E."/>
            <person name="Ozersky P."/>
            <person name="Riley A."/>
            <person name="Strowmatt C."/>
            <person name="Wagner-McPherson C."/>
            <person name="Wollam A."/>
            <person name="Yoakum M."/>
            <person name="Bell M."/>
            <person name="Dedhia N."/>
            <person name="Parnell L."/>
            <person name="Shah R."/>
            <person name="Rodriguez M."/>
            <person name="Hoon See L."/>
            <person name="Vil D."/>
            <person name="Baker J."/>
            <person name="Kirchoff K."/>
            <person name="Toth K."/>
            <person name="King L."/>
            <person name="Bahret A."/>
            <person name="Miller B."/>
            <person name="Marra M.A."/>
            <person name="Martienssen R."/>
            <person name="McCombie W.R."/>
            <person name="Wilson R.K."/>
            <person name="Murphy G."/>
            <person name="Bancroft I."/>
            <person name="Volckaert G."/>
            <person name="Wambutt R."/>
            <person name="Duesterhoeft A."/>
            <person name="Stiekema W."/>
            <person name="Pohl T."/>
            <person name="Entian K.-D."/>
            <person name="Terryn N."/>
            <person name="Hartley N."/>
            <person name="Bent E."/>
            <person name="Johnson S."/>
            <person name="Langham S.-A."/>
            <person name="McCullagh B."/>
            <person name="Robben J."/>
            <person name="Grymonprez B."/>
            <person name="Zimmermann W."/>
            <person name="Ramsperger U."/>
            <person name="Wedler H."/>
            <person name="Balke K."/>
            <person name="Wedler E."/>
            <person name="Peters S."/>
            <person name="van Staveren M."/>
            <person name="Dirkse W."/>
            <person name="Mooijman P."/>
            <person name="Klein Lankhorst R."/>
            <person name="Weitzenegger T."/>
            <person name="Bothe G."/>
            <person name="Rose M."/>
            <person name="Hauf J."/>
            <person name="Berneiser S."/>
            <person name="Hempel S."/>
            <person name="Feldpausch M."/>
            <person name="Lamberth S."/>
            <person name="Villarroel R."/>
            <person name="Gielen J."/>
            <person name="Ardiles W."/>
            <person name="Bents O."/>
            <person name="Lemcke K."/>
            <person name="Kolesov G."/>
            <person name="Mayer K.F.X."/>
            <person name="Rudd S."/>
            <person name="Schoof H."/>
            <person name="Schueller C."/>
            <person name="Zaccaria P."/>
            <person name="Mewes H.-W."/>
            <person name="Bevan M."/>
            <person name="Fransz P.F."/>
        </authorList>
    </citation>
    <scope>NUCLEOTIDE SEQUENCE [LARGE SCALE GENOMIC DNA]</scope>
    <source>
        <strain>cv. Columbia</strain>
    </source>
</reference>
<reference key="2">
    <citation type="journal article" date="2017" name="Plant J.">
        <title>Araport11: a complete reannotation of the Arabidopsis thaliana reference genome.</title>
        <authorList>
            <person name="Cheng C.Y."/>
            <person name="Krishnakumar V."/>
            <person name="Chan A.P."/>
            <person name="Thibaud-Nissen F."/>
            <person name="Schobel S."/>
            <person name="Town C.D."/>
        </authorList>
    </citation>
    <scope>GENOME REANNOTATION</scope>
    <source>
        <strain>cv. Columbia</strain>
    </source>
</reference>
<reference key="3">
    <citation type="journal article" date="2004" name="Plant Cell">
        <title>Genome-wide analysis of Arabidopsis pentatricopeptide repeat proteins reveals their essential role in organelle biogenesis.</title>
        <authorList>
            <person name="Lurin C."/>
            <person name="Andres C."/>
            <person name="Aubourg S."/>
            <person name="Bellaoui M."/>
            <person name="Bitton F."/>
            <person name="Bruyere C."/>
            <person name="Caboche M."/>
            <person name="Debast C."/>
            <person name="Gualberto J."/>
            <person name="Hoffmann B."/>
            <person name="Lecharny A."/>
            <person name="Le Ret M."/>
            <person name="Martin-Magniette M.-L."/>
            <person name="Mireau H."/>
            <person name="Peeters N."/>
            <person name="Renou J.-P."/>
            <person name="Szurek B."/>
            <person name="Taconnat L."/>
            <person name="Small I."/>
        </authorList>
    </citation>
    <scope>GENE FAMILY</scope>
</reference>
<name>PP390_ARATH</name>
<proteinExistence type="evidence at transcript level"/>
<protein>
    <recommendedName>
        <fullName>Pentatricopeptide repeat-containing protein At5g16860</fullName>
    </recommendedName>
</protein>